<gene>
    <name evidence="1" type="primary">ppa</name>
    <name type="ordered locus">BH1604</name>
</gene>
<sequence>MAIEPKVIEAFIEIPTGSQNKYEYDKERGVFKLDRVLFSPMFYPAEYGYIENTLALDGDPLDVLVIVSNPTFPGCVIDAKVLGFLNMIDGGEEDQKLIAVPTEDPRFKDVNSLNDLPKHKLDEIAHFFKTYKDLEGKKTEVGAYEDAEAAAKLIDECFARYKG</sequence>
<keyword id="KW-0963">Cytoplasm</keyword>
<keyword id="KW-0378">Hydrolase</keyword>
<keyword id="KW-0460">Magnesium</keyword>
<keyword id="KW-0479">Metal-binding</keyword>
<keyword id="KW-1185">Reference proteome</keyword>
<accession>Q9KCG7</accession>
<proteinExistence type="inferred from homology"/>
<name>IPYR_HALH5</name>
<protein>
    <recommendedName>
        <fullName evidence="1">Inorganic pyrophosphatase</fullName>
        <ecNumber evidence="1">3.6.1.1</ecNumber>
    </recommendedName>
    <alternativeName>
        <fullName evidence="1">Pyrophosphate phospho-hydrolase</fullName>
        <shortName evidence="1">PPase</shortName>
    </alternativeName>
</protein>
<organism>
    <name type="scientific">Halalkalibacterium halodurans (strain ATCC BAA-125 / DSM 18197 / FERM 7344 / JCM 9153 / C-125)</name>
    <name type="common">Bacillus halodurans</name>
    <dbReference type="NCBI Taxonomy" id="272558"/>
    <lineage>
        <taxon>Bacteria</taxon>
        <taxon>Bacillati</taxon>
        <taxon>Bacillota</taxon>
        <taxon>Bacilli</taxon>
        <taxon>Bacillales</taxon>
        <taxon>Bacillaceae</taxon>
        <taxon>Halalkalibacterium (ex Joshi et al. 2022)</taxon>
    </lineage>
</organism>
<dbReference type="EC" id="3.6.1.1" evidence="1"/>
<dbReference type="EMBL" id="BA000004">
    <property type="protein sequence ID" value="BAB05323.1"/>
    <property type="molecule type" value="Genomic_DNA"/>
</dbReference>
<dbReference type="PIR" id="D83850">
    <property type="entry name" value="D83850"/>
</dbReference>
<dbReference type="RefSeq" id="WP_010897767.1">
    <property type="nucleotide sequence ID" value="NC_002570.2"/>
</dbReference>
<dbReference type="SMR" id="Q9KCG7"/>
<dbReference type="STRING" id="272558.gene:10727502"/>
<dbReference type="GeneID" id="87597225"/>
<dbReference type="KEGG" id="bha:BH1604"/>
<dbReference type="eggNOG" id="COG0221">
    <property type="taxonomic scope" value="Bacteria"/>
</dbReference>
<dbReference type="HOGENOM" id="CLU_073198_1_2_9"/>
<dbReference type="OrthoDB" id="5187599at2"/>
<dbReference type="Proteomes" id="UP000001258">
    <property type="component" value="Chromosome"/>
</dbReference>
<dbReference type="GO" id="GO:0005737">
    <property type="term" value="C:cytoplasm"/>
    <property type="evidence" value="ECO:0007669"/>
    <property type="project" value="UniProtKB-SubCell"/>
</dbReference>
<dbReference type="GO" id="GO:0004427">
    <property type="term" value="F:inorganic diphosphate phosphatase activity"/>
    <property type="evidence" value="ECO:0007669"/>
    <property type="project" value="UniProtKB-UniRule"/>
</dbReference>
<dbReference type="GO" id="GO:0000287">
    <property type="term" value="F:magnesium ion binding"/>
    <property type="evidence" value="ECO:0007669"/>
    <property type="project" value="UniProtKB-UniRule"/>
</dbReference>
<dbReference type="GO" id="GO:0006796">
    <property type="term" value="P:phosphate-containing compound metabolic process"/>
    <property type="evidence" value="ECO:0007669"/>
    <property type="project" value="InterPro"/>
</dbReference>
<dbReference type="CDD" id="cd00412">
    <property type="entry name" value="pyrophosphatase"/>
    <property type="match status" value="1"/>
</dbReference>
<dbReference type="FunFam" id="3.90.80.10:FF:000003">
    <property type="entry name" value="Inorganic pyrophosphatase"/>
    <property type="match status" value="1"/>
</dbReference>
<dbReference type="Gene3D" id="3.90.80.10">
    <property type="entry name" value="Inorganic pyrophosphatase"/>
    <property type="match status" value="1"/>
</dbReference>
<dbReference type="HAMAP" id="MF_00209">
    <property type="entry name" value="Inorganic_PPase"/>
    <property type="match status" value="1"/>
</dbReference>
<dbReference type="InterPro" id="IPR008162">
    <property type="entry name" value="Pyrophosphatase"/>
</dbReference>
<dbReference type="InterPro" id="IPR036649">
    <property type="entry name" value="Pyrophosphatase_sf"/>
</dbReference>
<dbReference type="PANTHER" id="PTHR10286">
    <property type="entry name" value="INORGANIC PYROPHOSPHATASE"/>
    <property type="match status" value="1"/>
</dbReference>
<dbReference type="Pfam" id="PF00719">
    <property type="entry name" value="Pyrophosphatase"/>
    <property type="match status" value="1"/>
</dbReference>
<dbReference type="SUPFAM" id="SSF50324">
    <property type="entry name" value="Inorganic pyrophosphatase"/>
    <property type="match status" value="1"/>
</dbReference>
<dbReference type="PROSITE" id="PS00387">
    <property type="entry name" value="PPASE"/>
    <property type="match status" value="1"/>
</dbReference>
<reference key="1">
    <citation type="journal article" date="2000" name="Nucleic Acids Res.">
        <title>Complete genome sequence of the alkaliphilic bacterium Bacillus halodurans and genomic sequence comparison with Bacillus subtilis.</title>
        <authorList>
            <person name="Takami H."/>
            <person name="Nakasone K."/>
            <person name="Takaki Y."/>
            <person name="Maeno G."/>
            <person name="Sasaki R."/>
            <person name="Masui N."/>
            <person name="Fuji F."/>
            <person name="Hirama C."/>
            <person name="Nakamura Y."/>
            <person name="Ogasawara N."/>
            <person name="Kuhara S."/>
            <person name="Horikoshi K."/>
        </authorList>
    </citation>
    <scope>NUCLEOTIDE SEQUENCE [LARGE SCALE GENOMIC DNA]</scope>
    <source>
        <strain>ATCC BAA-125 / DSM 18197 / FERM 7344 / JCM 9153 / C-125</strain>
    </source>
</reference>
<comment type="function">
    <text evidence="1">Catalyzes the hydrolysis of inorganic pyrophosphate (PPi) forming two phosphate ions.</text>
</comment>
<comment type="catalytic activity">
    <reaction evidence="1">
        <text>diphosphate + H2O = 2 phosphate + H(+)</text>
        <dbReference type="Rhea" id="RHEA:24576"/>
        <dbReference type="ChEBI" id="CHEBI:15377"/>
        <dbReference type="ChEBI" id="CHEBI:15378"/>
        <dbReference type="ChEBI" id="CHEBI:33019"/>
        <dbReference type="ChEBI" id="CHEBI:43474"/>
        <dbReference type="EC" id="3.6.1.1"/>
    </reaction>
</comment>
<comment type="cofactor">
    <cofactor evidence="1">
        <name>Mg(2+)</name>
        <dbReference type="ChEBI" id="CHEBI:18420"/>
    </cofactor>
</comment>
<comment type="subunit">
    <text evidence="1">Homohexamer.</text>
</comment>
<comment type="subcellular location">
    <subcellularLocation>
        <location evidence="1">Cytoplasm</location>
    </subcellularLocation>
</comment>
<comment type="similarity">
    <text evidence="1">Belongs to the PPase family.</text>
</comment>
<feature type="chain" id="PRO_0000137477" description="Inorganic pyrophosphatase">
    <location>
        <begin position="1"/>
        <end position="163"/>
    </location>
</feature>
<feature type="binding site" evidence="1">
    <location>
        <position position="21"/>
    </location>
    <ligand>
        <name>substrate</name>
    </ligand>
</feature>
<feature type="binding site" evidence="1">
    <location>
        <position position="35"/>
    </location>
    <ligand>
        <name>substrate</name>
    </ligand>
</feature>
<feature type="binding site" evidence="1">
    <location>
        <position position="47"/>
    </location>
    <ligand>
        <name>substrate</name>
    </ligand>
</feature>
<feature type="binding site" evidence="1">
    <location>
        <position position="57"/>
    </location>
    <ligand>
        <name>Mg(2+)</name>
        <dbReference type="ChEBI" id="CHEBI:18420"/>
        <label>1</label>
    </ligand>
</feature>
<feature type="binding site" evidence="1">
    <location>
        <position position="62"/>
    </location>
    <ligand>
        <name>Mg(2+)</name>
        <dbReference type="ChEBI" id="CHEBI:18420"/>
        <label>1</label>
    </ligand>
</feature>
<feature type="binding site" evidence="1">
    <location>
        <position position="62"/>
    </location>
    <ligand>
        <name>Mg(2+)</name>
        <dbReference type="ChEBI" id="CHEBI:18420"/>
        <label>2</label>
    </ligand>
</feature>
<feature type="binding site" evidence="1">
    <location>
        <position position="94"/>
    </location>
    <ligand>
        <name>Mg(2+)</name>
        <dbReference type="ChEBI" id="CHEBI:18420"/>
        <label>1</label>
    </ligand>
</feature>
<feature type="binding site" evidence="1">
    <location>
        <position position="131"/>
    </location>
    <ligand>
        <name>substrate</name>
    </ligand>
</feature>
<evidence type="ECO:0000255" key="1">
    <source>
        <dbReference type="HAMAP-Rule" id="MF_00209"/>
    </source>
</evidence>